<proteinExistence type="inferred from homology"/>
<name>RL36_WIGBR</name>
<accession>Q8D1Z1</accession>
<reference key="1">
    <citation type="journal article" date="2002" name="Nat. Genet.">
        <title>Genome sequence of the endocellular obligate symbiont of tsetse flies, Wigglesworthia glossinidia.</title>
        <authorList>
            <person name="Akman L."/>
            <person name="Yamashita A."/>
            <person name="Watanabe H."/>
            <person name="Oshima K."/>
            <person name="Shiba T."/>
            <person name="Hattori M."/>
            <person name="Aksoy S."/>
        </authorList>
    </citation>
    <scope>NUCLEOTIDE SEQUENCE [LARGE SCALE GENOMIC DNA]</scope>
</reference>
<sequence length="38" mass="4509">MKVRTSVRKLCRNCKIVKRNRVIRVLCSVDAKHKQRQG</sequence>
<organism>
    <name type="scientific">Wigglesworthia glossinidia brevipalpis</name>
    <dbReference type="NCBI Taxonomy" id="36870"/>
    <lineage>
        <taxon>Bacteria</taxon>
        <taxon>Pseudomonadati</taxon>
        <taxon>Pseudomonadota</taxon>
        <taxon>Gammaproteobacteria</taxon>
        <taxon>Enterobacterales</taxon>
        <taxon>Erwiniaceae</taxon>
        <taxon>Wigglesworthia</taxon>
    </lineage>
</organism>
<keyword id="KW-1185">Reference proteome</keyword>
<keyword id="KW-0687">Ribonucleoprotein</keyword>
<keyword id="KW-0689">Ribosomal protein</keyword>
<comment type="similarity">
    <text evidence="1">Belongs to the bacterial ribosomal protein bL36 family.</text>
</comment>
<evidence type="ECO:0000255" key="1">
    <source>
        <dbReference type="HAMAP-Rule" id="MF_00251"/>
    </source>
</evidence>
<evidence type="ECO:0000305" key="2"/>
<feature type="chain" id="PRO_0000126296" description="Large ribosomal subunit protein bL36">
    <location>
        <begin position="1"/>
        <end position="38"/>
    </location>
</feature>
<gene>
    <name evidence="1" type="primary">rpmJ</name>
    <name type="ordered locus">WIGBR5640</name>
</gene>
<protein>
    <recommendedName>
        <fullName evidence="1">Large ribosomal subunit protein bL36</fullName>
    </recommendedName>
    <alternativeName>
        <fullName evidence="2">50S ribosomal protein L36</fullName>
    </alternativeName>
</protein>
<dbReference type="EMBL" id="BA000021">
    <property type="protein sequence ID" value="BAC24710.1"/>
    <property type="molecule type" value="Genomic_DNA"/>
</dbReference>
<dbReference type="SMR" id="Q8D1Z1"/>
<dbReference type="STRING" id="36870.gene:10369073"/>
<dbReference type="KEGG" id="wbr:rpmJ"/>
<dbReference type="eggNOG" id="COG0257">
    <property type="taxonomic scope" value="Bacteria"/>
</dbReference>
<dbReference type="HOGENOM" id="CLU_135723_6_2_6"/>
<dbReference type="OrthoDB" id="9802520at2"/>
<dbReference type="Proteomes" id="UP000000562">
    <property type="component" value="Chromosome"/>
</dbReference>
<dbReference type="GO" id="GO:0005737">
    <property type="term" value="C:cytoplasm"/>
    <property type="evidence" value="ECO:0007669"/>
    <property type="project" value="UniProtKB-ARBA"/>
</dbReference>
<dbReference type="GO" id="GO:1990904">
    <property type="term" value="C:ribonucleoprotein complex"/>
    <property type="evidence" value="ECO:0007669"/>
    <property type="project" value="UniProtKB-KW"/>
</dbReference>
<dbReference type="GO" id="GO:0005840">
    <property type="term" value="C:ribosome"/>
    <property type="evidence" value="ECO:0007669"/>
    <property type="project" value="UniProtKB-KW"/>
</dbReference>
<dbReference type="GO" id="GO:0003735">
    <property type="term" value="F:structural constituent of ribosome"/>
    <property type="evidence" value="ECO:0007669"/>
    <property type="project" value="InterPro"/>
</dbReference>
<dbReference type="GO" id="GO:0006412">
    <property type="term" value="P:translation"/>
    <property type="evidence" value="ECO:0007669"/>
    <property type="project" value="UniProtKB-UniRule"/>
</dbReference>
<dbReference type="HAMAP" id="MF_00251">
    <property type="entry name" value="Ribosomal_bL36"/>
    <property type="match status" value="1"/>
</dbReference>
<dbReference type="InterPro" id="IPR000473">
    <property type="entry name" value="Ribosomal_bL36"/>
</dbReference>
<dbReference type="InterPro" id="IPR035977">
    <property type="entry name" value="Ribosomal_bL36_sp"/>
</dbReference>
<dbReference type="NCBIfam" id="TIGR01022">
    <property type="entry name" value="rpmJ_bact"/>
    <property type="match status" value="1"/>
</dbReference>
<dbReference type="PANTHER" id="PTHR42888">
    <property type="entry name" value="50S RIBOSOMAL PROTEIN L36, CHLOROPLASTIC"/>
    <property type="match status" value="1"/>
</dbReference>
<dbReference type="PANTHER" id="PTHR42888:SF1">
    <property type="entry name" value="LARGE RIBOSOMAL SUBUNIT PROTEIN BL36C"/>
    <property type="match status" value="1"/>
</dbReference>
<dbReference type="Pfam" id="PF00444">
    <property type="entry name" value="Ribosomal_L36"/>
    <property type="match status" value="1"/>
</dbReference>
<dbReference type="SUPFAM" id="SSF57840">
    <property type="entry name" value="Ribosomal protein L36"/>
    <property type="match status" value="1"/>
</dbReference>
<dbReference type="PROSITE" id="PS00828">
    <property type="entry name" value="RIBOSOMAL_L36"/>
    <property type="match status" value="1"/>
</dbReference>